<sequence length="95" mass="10391">MSVDLQTVKRVARLARIAVSEEDAERMTGELNAILGFVEQLNEVDVSGVEPMTSVTPMEMKKRQDVVTDGNKAADIVANAPATEENFFLVPKVVE</sequence>
<feature type="chain" id="PRO_0000105325" description="Glutamyl-tRNA(Gln) amidotransferase subunit C">
    <location>
        <begin position="1"/>
        <end position="95"/>
    </location>
</feature>
<name>GATC_RHILO</name>
<protein>
    <recommendedName>
        <fullName>Glutamyl-tRNA(Gln) amidotransferase subunit C</fullName>
        <shortName>Glu-ADT subunit C</shortName>
        <ecNumber evidence="1">6.3.5.-</ecNumber>
    </recommendedName>
</protein>
<accession>Q98M93</accession>
<reference key="1">
    <citation type="journal article" date="2000" name="DNA Res.">
        <title>Complete genome structure of the nitrogen-fixing symbiotic bacterium Mesorhizobium loti.</title>
        <authorList>
            <person name="Kaneko T."/>
            <person name="Nakamura Y."/>
            <person name="Sato S."/>
            <person name="Asamizu E."/>
            <person name="Kato T."/>
            <person name="Sasamoto S."/>
            <person name="Watanabe A."/>
            <person name="Idesawa K."/>
            <person name="Ishikawa A."/>
            <person name="Kawashima K."/>
            <person name="Kimura T."/>
            <person name="Kishida Y."/>
            <person name="Kiyokawa C."/>
            <person name="Kohara M."/>
            <person name="Matsumoto M."/>
            <person name="Matsuno A."/>
            <person name="Mochizuki Y."/>
            <person name="Nakayama S."/>
            <person name="Nakazaki N."/>
            <person name="Shimpo S."/>
            <person name="Sugimoto M."/>
            <person name="Takeuchi C."/>
            <person name="Yamada M."/>
            <person name="Tabata S."/>
        </authorList>
    </citation>
    <scope>NUCLEOTIDE SEQUENCE [LARGE SCALE GENOMIC DNA]</scope>
    <source>
        <strain>LMG 29417 / CECT 9101 / MAFF 303099</strain>
    </source>
</reference>
<organism>
    <name type="scientific">Mesorhizobium japonicum (strain LMG 29417 / CECT 9101 / MAFF 303099)</name>
    <name type="common">Mesorhizobium loti (strain MAFF 303099)</name>
    <dbReference type="NCBI Taxonomy" id="266835"/>
    <lineage>
        <taxon>Bacteria</taxon>
        <taxon>Pseudomonadati</taxon>
        <taxon>Pseudomonadota</taxon>
        <taxon>Alphaproteobacteria</taxon>
        <taxon>Hyphomicrobiales</taxon>
        <taxon>Phyllobacteriaceae</taxon>
        <taxon>Mesorhizobium</taxon>
    </lineage>
</organism>
<comment type="function">
    <text evidence="1">Allows the formation of correctly charged Asn-tRNA(Asn) or Gln-tRNA(Gln) through the transamidation of misacylated Asp-tRNA(Asn) or Glu-tRNA(Gln) in organisms which lack either or both of asparaginyl-tRNA or glutaminyl-tRNA synthetases. The reaction takes place in the presence of glutamine and ATP through an activated phospho-Asp-tRNA(Asn) or phospho-Glu-tRNA(Gln).</text>
</comment>
<comment type="catalytic activity">
    <reaction evidence="1">
        <text>L-glutamyl-tRNA(Gln) + L-glutamine + ATP + H2O = L-glutaminyl-tRNA(Gln) + L-glutamate + ADP + phosphate + H(+)</text>
        <dbReference type="Rhea" id="RHEA:17521"/>
        <dbReference type="Rhea" id="RHEA-COMP:9681"/>
        <dbReference type="Rhea" id="RHEA-COMP:9684"/>
        <dbReference type="ChEBI" id="CHEBI:15377"/>
        <dbReference type="ChEBI" id="CHEBI:15378"/>
        <dbReference type="ChEBI" id="CHEBI:29985"/>
        <dbReference type="ChEBI" id="CHEBI:30616"/>
        <dbReference type="ChEBI" id="CHEBI:43474"/>
        <dbReference type="ChEBI" id="CHEBI:58359"/>
        <dbReference type="ChEBI" id="CHEBI:78520"/>
        <dbReference type="ChEBI" id="CHEBI:78521"/>
        <dbReference type="ChEBI" id="CHEBI:456216"/>
    </reaction>
</comment>
<comment type="catalytic activity">
    <reaction evidence="1">
        <text>L-aspartyl-tRNA(Asn) + L-glutamine + ATP + H2O = L-asparaginyl-tRNA(Asn) + L-glutamate + ADP + phosphate + 2 H(+)</text>
        <dbReference type="Rhea" id="RHEA:14513"/>
        <dbReference type="Rhea" id="RHEA-COMP:9674"/>
        <dbReference type="Rhea" id="RHEA-COMP:9677"/>
        <dbReference type="ChEBI" id="CHEBI:15377"/>
        <dbReference type="ChEBI" id="CHEBI:15378"/>
        <dbReference type="ChEBI" id="CHEBI:29985"/>
        <dbReference type="ChEBI" id="CHEBI:30616"/>
        <dbReference type="ChEBI" id="CHEBI:43474"/>
        <dbReference type="ChEBI" id="CHEBI:58359"/>
        <dbReference type="ChEBI" id="CHEBI:78515"/>
        <dbReference type="ChEBI" id="CHEBI:78516"/>
        <dbReference type="ChEBI" id="CHEBI:456216"/>
    </reaction>
</comment>
<comment type="subunit">
    <text evidence="1">Heterotrimer of A, B and C subunits.</text>
</comment>
<comment type="similarity">
    <text evidence="1">Belongs to the GatC family.</text>
</comment>
<keyword id="KW-0067">ATP-binding</keyword>
<keyword id="KW-0436">Ligase</keyword>
<keyword id="KW-0547">Nucleotide-binding</keyword>
<keyword id="KW-0648">Protein biosynthesis</keyword>
<dbReference type="EC" id="6.3.5.-" evidence="1"/>
<dbReference type="EMBL" id="BA000012">
    <property type="protein sequence ID" value="BAB48220.1"/>
    <property type="molecule type" value="Genomic_DNA"/>
</dbReference>
<dbReference type="RefSeq" id="WP_010909575.1">
    <property type="nucleotide sequence ID" value="NC_002678.2"/>
</dbReference>
<dbReference type="SMR" id="Q98M93"/>
<dbReference type="GeneID" id="66683960"/>
<dbReference type="KEGG" id="mlo:msl0677"/>
<dbReference type="eggNOG" id="COG0721">
    <property type="taxonomic scope" value="Bacteria"/>
</dbReference>
<dbReference type="HOGENOM" id="CLU_105899_2_0_5"/>
<dbReference type="Proteomes" id="UP000000552">
    <property type="component" value="Chromosome"/>
</dbReference>
<dbReference type="GO" id="GO:0050566">
    <property type="term" value="F:asparaginyl-tRNA synthase (glutamine-hydrolyzing) activity"/>
    <property type="evidence" value="ECO:0007669"/>
    <property type="project" value="RHEA"/>
</dbReference>
<dbReference type="GO" id="GO:0005524">
    <property type="term" value="F:ATP binding"/>
    <property type="evidence" value="ECO:0007669"/>
    <property type="project" value="UniProtKB-KW"/>
</dbReference>
<dbReference type="GO" id="GO:0050567">
    <property type="term" value="F:glutaminyl-tRNA synthase (glutamine-hydrolyzing) activity"/>
    <property type="evidence" value="ECO:0007669"/>
    <property type="project" value="UniProtKB-UniRule"/>
</dbReference>
<dbReference type="GO" id="GO:0070681">
    <property type="term" value="P:glutaminyl-tRNAGln biosynthesis via transamidation"/>
    <property type="evidence" value="ECO:0007669"/>
    <property type="project" value="TreeGrafter"/>
</dbReference>
<dbReference type="GO" id="GO:0006450">
    <property type="term" value="P:regulation of translational fidelity"/>
    <property type="evidence" value="ECO:0007669"/>
    <property type="project" value="InterPro"/>
</dbReference>
<dbReference type="GO" id="GO:0006412">
    <property type="term" value="P:translation"/>
    <property type="evidence" value="ECO:0007669"/>
    <property type="project" value="UniProtKB-UniRule"/>
</dbReference>
<dbReference type="Gene3D" id="1.10.20.60">
    <property type="entry name" value="Glu-tRNAGln amidotransferase C subunit, N-terminal domain"/>
    <property type="match status" value="1"/>
</dbReference>
<dbReference type="HAMAP" id="MF_00122">
    <property type="entry name" value="GatC"/>
    <property type="match status" value="1"/>
</dbReference>
<dbReference type="InterPro" id="IPR036113">
    <property type="entry name" value="Asp/Glu-ADT_sf_sub_c"/>
</dbReference>
<dbReference type="InterPro" id="IPR003837">
    <property type="entry name" value="GatC"/>
</dbReference>
<dbReference type="NCBIfam" id="TIGR00135">
    <property type="entry name" value="gatC"/>
    <property type="match status" value="1"/>
</dbReference>
<dbReference type="PANTHER" id="PTHR15004">
    <property type="entry name" value="GLUTAMYL-TRNA(GLN) AMIDOTRANSFERASE SUBUNIT C, MITOCHONDRIAL"/>
    <property type="match status" value="1"/>
</dbReference>
<dbReference type="PANTHER" id="PTHR15004:SF0">
    <property type="entry name" value="GLUTAMYL-TRNA(GLN) AMIDOTRANSFERASE SUBUNIT C, MITOCHONDRIAL"/>
    <property type="match status" value="1"/>
</dbReference>
<dbReference type="Pfam" id="PF02686">
    <property type="entry name" value="GatC"/>
    <property type="match status" value="1"/>
</dbReference>
<dbReference type="SUPFAM" id="SSF141000">
    <property type="entry name" value="Glu-tRNAGln amidotransferase C subunit"/>
    <property type="match status" value="1"/>
</dbReference>
<proteinExistence type="inferred from homology"/>
<gene>
    <name evidence="1" type="primary">gatC</name>
    <name type="ordered locus">msl0677</name>
</gene>
<evidence type="ECO:0000255" key="1">
    <source>
        <dbReference type="HAMAP-Rule" id="MF_00122"/>
    </source>
</evidence>